<name>FTSB_ESCF3</name>
<sequence>MGKLTLLLLAILVWLQYSLWFGKNGIHDYSRVNDDVAAQQATNAKLKARNDQLFAEIDDLNGGQEALEERARNELSMTKPGETFYRLVPDASKRAQTAGQNNR</sequence>
<reference key="1">
    <citation type="journal article" date="2009" name="PLoS Genet.">
        <title>Organised genome dynamics in the Escherichia coli species results in highly diverse adaptive paths.</title>
        <authorList>
            <person name="Touchon M."/>
            <person name="Hoede C."/>
            <person name="Tenaillon O."/>
            <person name="Barbe V."/>
            <person name="Baeriswyl S."/>
            <person name="Bidet P."/>
            <person name="Bingen E."/>
            <person name="Bonacorsi S."/>
            <person name="Bouchier C."/>
            <person name="Bouvet O."/>
            <person name="Calteau A."/>
            <person name="Chiapello H."/>
            <person name="Clermont O."/>
            <person name="Cruveiller S."/>
            <person name="Danchin A."/>
            <person name="Diard M."/>
            <person name="Dossat C."/>
            <person name="Karoui M.E."/>
            <person name="Frapy E."/>
            <person name="Garry L."/>
            <person name="Ghigo J.M."/>
            <person name="Gilles A.M."/>
            <person name="Johnson J."/>
            <person name="Le Bouguenec C."/>
            <person name="Lescat M."/>
            <person name="Mangenot S."/>
            <person name="Martinez-Jehanne V."/>
            <person name="Matic I."/>
            <person name="Nassif X."/>
            <person name="Oztas S."/>
            <person name="Petit M.A."/>
            <person name="Pichon C."/>
            <person name="Rouy Z."/>
            <person name="Ruf C.S."/>
            <person name="Schneider D."/>
            <person name="Tourret J."/>
            <person name="Vacherie B."/>
            <person name="Vallenet D."/>
            <person name="Medigue C."/>
            <person name="Rocha E.P.C."/>
            <person name="Denamur E."/>
        </authorList>
    </citation>
    <scope>NUCLEOTIDE SEQUENCE [LARGE SCALE GENOMIC DNA]</scope>
    <source>
        <strain>ATCC 35469 / DSM 13698 / BCRC 15582 / CCUG 18766 / IAM 14443 / JCM 21226 / LMG 7866 / NBRC 102419 / NCTC 12128 / CDC 0568-73</strain>
    </source>
</reference>
<gene>
    <name evidence="1" type="primary">ftsB</name>
    <name type="ordered locus">EFER_0320</name>
</gene>
<accession>B7LWK7</accession>
<comment type="function">
    <text evidence="1">Essential cell division protein. May link together the upstream cell division proteins, which are predominantly cytoplasmic, with the downstream cell division proteins, which are predominantly periplasmic.</text>
</comment>
<comment type="subunit">
    <text evidence="1">Part of a complex composed of FtsB, FtsL and FtsQ.</text>
</comment>
<comment type="subcellular location">
    <subcellularLocation>
        <location evidence="1">Cell inner membrane</location>
        <topology evidence="1">Single-pass type II membrane protein</topology>
    </subcellularLocation>
    <text evidence="1">Localizes to the division septum.</text>
</comment>
<comment type="similarity">
    <text evidence="1">Belongs to the FtsB family.</text>
</comment>
<dbReference type="EMBL" id="CU928158">
    <property type="protein sequence ID" value="CAQ87883.1"/>
    <property type="molecule type" value="Genomic_DNA"/>
</dbReference>
<dbReference type="RefSeq" id="WP_000517469.1">
    <property type="nucleotide sequence ID" value="NC_011740.1"/>
</dbReference>
<dbReference type="SMR" id="B7LWK7"/>
<dbReference type="GeneID" id="75058608"/>
<dbReference type="KEGG" id="efe:EFER_0320"/>
<dbReference type="HOGENOM" id="CLU_134863_5_2_6"/>
<dbReference type="OrthoDB" id="7061211at2"/>
<dbReference type="Proteomes" id="UP000000745">
    <property type="component" value="Chromosome"/>
</dbReference>
<dbReference type="GO" id="GO:0032153">
    <property type="term" value="C:cell division site"/>
    <property type="evidence" value="ECO:0007669"/>
    <property type="project" value="UniProtKB-UniRule"/>
</dbReference>
<dbReference type="GO" id="GO:0030428">
    <property type="term" value="C:cell septum"/>
    <property type="evidence" value="ECO:0007669"/>
    <property type="project" value="TreeGrafter"/>
</dbReference>
<dbReference type="GO" id="GO:0005886">
    <property type="term" value="C:plasma membrane"/>
    <property type="evidence" value="ECO:0007669"/>
    <property type="project" value="UniProtKB-SubCell"/>
</dbReference>
<dbReference type="GO" id="GO:0043093">
    <property type="term" value="P:FtsZ-dependent cytokinesis"/>
    <property type="evidence" value="ECO:0007669"/>
    <property type="project" value="UniProtKB-UniRule"/>
</dbReference>
<dbReference type="FunFam" id="1.20.5.400:FF:000001">
    <property type="entry name" value="Cell division protein FtsB"/>
    <property type="match status" value="1"/>
</dbReference>
<dbReference type="Gene3D" id="1.20.5.400">
    <property type="match status" value="1"/>
</dbReference>
<dbReference type="HAMAP" id="MF_00599">
    <property type="entry name" value="FtsB"/>
    <property type="match status" value="1"/>
</dbReference>
<dbReference type="InterPro" id="IPR023081">
    <property type="entry name" value="Cell_div_FtsB"/>
</dbReference>
<dbReference type="InterPro" id="IPR007060">
    <property type="entry name" value="FtsL/DivIC"/>
</dbReference>
<dbReference type="NCBIfam" id="NF002058">
    <property type="entry name" value="PRK00888.1"/>
    <property type="match status" value="1"/>
</dbReference>
<dbReference type="PANTHER" id="PTHR37485">
    <property type="entry name" value="CELL DIVISION PROTEIN FTSB"/>
    <property type="match status" value="1"/>
</dbReference>
<dbReference type="PANTHER" id="PTHR37485:SF1">
    <property type="entry name" value="CELL DIVISION PROTEIN FTSB"/>
    <property type="match status" value="1"/>
</dbReference>
<dbReference type="Pfam" id="PF04977">
    <property type="entry name" value="DivIC"/>
    <property type="match status" value="1"/>
</dbReference>
<evidence type="ECO:0000255" key="1">
    <source>
        <dbReference type="HAMAP-Rule" id="MF_00599"/>
    </source>
</evidence>
<protein>
    <recommendedName>
        <fullName evidence="1">Cell division protein FtsB</fullName>
    </recommendedName>
</protein>
<organism>
    <name type="scientific">Escherichia fergusonii (strain ATCC 35469 / DSM 13698 / CCUG 18766 / IAM 14443 / JCM 21226 / LMG 7866 / NBRC 102419 / NCTC 12128 / CDC 0568-73)</name>
    <dbReference type="NCBI Taxonomy" id="585054"/>
    <lineage>
        <taxon>Bacteria</taxon>
        <taxon>Pseudomonadati</taxon>
        <taxon>Pseudomonadota</taxon>
        <taxon>Gammaproteobacteria</taxon>
        <taxon>Enterobacterales</taxon>
        <taxon>Enterobacteriaceae</taxon>
        <taxon>Escherichia</taxon>
    </lineage>
</organism>
<keyword id="KW-0131">Cell cycle</keyword>
<keyword id="KW-0132">Cell division</keyword>
<keyword id="KW-0997">Cell inner membrane</keyword>
<keyword id="KW-1003">Cell membrane</keyword>
<keyword id="KW-0175">Coiled coil</keyword>
<keyword id="KW-0472">Membrane</keyword>
<keyword id="KW-0812">Transmembrane</keyword>
<keyword id="KW-1133">Transmembrane helix</keyword>
<proteinExistence type="inferred from homology"/>
<feature type="chain" id="PRO_1000129931" description="Cell division protein FtsB">
    <location>
        <begin position="1"/>
        <end position="103"/>
    </location>
</feature>
<feature type="topological domain" description="Cytoplasmic" evidence="1">
    <location>
        <begin position="1"/>
        <end position="3"/>
    </location>
</feature>
<feature type="transmembrane region" description="Helical" evidence="1">
    <location>
        <begin position="4"/>
        <end position="21"/>
    </location>
</feature>
<feature type="topological domain" description="Periplasmic" evidence="1">
    <location>
        <begin position="22"/>
        <end position="103"/>
    </location>
</feature>
<feature type="coiled-coil region" evidence="1">
    <location>
        <begin position="31"/>
        <end position="71"/>
    </location>
</feature>